<organism>
    <name type="scientific">Escherichia coli O45:K1 (strain S88 / ExPEC)</name>
    <dbReference type="NCBI Taxonomy" id="585035"/>
    <lineage>
        <taxon>Bacteria</taxon>
        <taxon>Pseudomonadati</taxon>
        <taxon>Pseudomonadota</taxon>
        <taxon>Gammaproteobacteria</taxon>
        <taxon>Enterobacterales</taxon>
        <taxon>Enterobacteriaceae</taxon>
        <taxon>Escherichia</taxon>
    </lineage>
</organism>
<sequence>MKKVTAMLFSMAVGLNAVSMAAKAKASEEQETDVLLIGGGIMSATLGTYLRELEPEWSMTMVERLEGVAQESSNGWNNAGTGHSALMELNYTPQNADGSISIEKAVAINEAFQISRQFWAHQVERGVLRTPRSFINTVPHMSFVWGEDNVNFLRARYAALQQSSLFRGMRYSEDHAQIKEWAPLVMEGRDPQQKVAATRTEIGTDVNYGEITRQLIASLQKKSNFSLQLSSEVRALKRNDDNTWTVTVADLKNGTAQNIRAKFVFIGAGGAALKLLQESGIPEAKDYAGFPVGGQFLVSENPDVVNHHLAKVYGKASVGAPPMSVPHIDTRVLDGKRVVLFGPFATFSTKFLKNGSLWDLMSSTTTSNVMPMMHVGLDNFDLVKYLVSQVMLSEEDRFEALKEYYPQAKKEDWRLWQAGQRVQIIKRDADKGGVLRLGTEVVSDQQGTIAALLGASPGASTAAPIMLNLLEKVFGDRVSSPQWQATLKAIVPSYGRKLNGDVAATERELQYTSEVLGLKYDKPQAADSTPKPQLKPQPVQKEVADIAL</sequence>
<proteinExistence type="inferred from homology"/>
<gene>
    <name evidence="1" type="primary">mqo</name>
    <name type="ordered locus">ECS88_2358</name>
</gene>
<accession>B7MFC3</accession>
<name>MQO_ECO45</name>
<reference key="1">
    <citation type="journal article" date="2009" name="PLoS Genet.">
        <title>Organised genome dynamics in the Escherichia coli species results in highly diverse adaptive paths.</title>
        <authorList>
            <person name="Touchon M."/>
            <person name="Hoede C."/>
            <person name="Tenaillon O."/>
            <person name="Barbe V."/>
            <person name="Baeriswyl S."/>
            <person name="Bidet P."/>
            <person name="Bingen E."/>
            <person name="Bonacorsi S."/>
            <person name="Bouchier C."/>
            <person name="Bouvet O."/>
            <person name="Calteau A."/>
            <person name="Chiapello H."/>
            <person name="Clermont O."/>
            <person name="Cruveiller S."/>
            <person name="Danchin A."/>
            <person name="Diard M."/>
            <person name="Dossat C."/>
            <person name="Karoui M.E."/>
            <person name="Frapy E."/>
            <person name="Garry L."/>
            <person name="Ghigo J.M."/>
            <person name="Gilles A.M."/>
            <person name="Johnson J."/>
            <person name="Le Bouguenec C."/>
            <person name="Lescat M."/>
            <person name="Mangenot S."/>
            <person name="Martinez-Jehanne V."/>
            <person name="Matic I."/>
            <person name="Nassif X."/>
            <person name="Oztas S."/>
            <person name="Petit M.A."/>
            <person name="Pichon C."/>
            <person name="Rouy Z."/>
            <person name="Ruf C.S."/>
            <person name="Schneider D."/>
            <person name="Tourret J."/>
            <person name="Vacherie B."/>
            <person name="Vallenet D."/>
            <person name="Medigue C."/>
            <person name="Rocha E.P.C."/>
            <person name="Denamur E."/>
        </authorList>
    </citation>
    <scope>NUCLEOTIDE SEQUENCE [LARGE SCALE GENOMIC DNA]</scope>
    <source>
        <strain>S88 / ExPEC</strain>
    </source>
</reference>
<feature type="chain" id="PRO_1000191314" description="Probable malate:quinone oxidoreductase">
    <location>
        <begin position="1"/>
        <end position="548"/>
    </location>
</feature>
<feature type="region of interest" description="Disordered" evidence="2">
    <location>
        <begin position="521"/>
        <end position="548"/>
    </location>
</feature>
<feature type="compositionally biased region" description="Low complexity" evidence="2">
    <location>
        <begin position="530"/>
        <end position="541"/>
    </location>
</feature>
<dbReference type="EC" id="1.1.5.4" evidence="1"/>
<dbReference type="EMBL" id="CU928161">
    <property type="protein sequence ID" value="CAR03639.1"/>
    <property type="molecule type" value="Genomic_DNA"/>
</dbReference>
<dbReference type="RefSeq" id="WP_000758066.1">
    <property type="nucleotide sequence ID" value="NC_011742.1"/>
</dbReference>
<dbReference type="SMR" id="B7MFC3"/>
<dbReference type="KEGG" id="ecz:ECS88_2358"/>
<dbReference type="HOGENOM" id="CLU_028151_0_0_6"/>
<dbReference type="UniPathway" id="UPA00223">
    <property type="reaction ID" value="UER01008"/>
</dbReference>
<dbReference type="Proteomes" id="UP000000747">
    <property type="component" value="Chromosome"/>
</dbReference>
<dbReference type="GO" id="GO:0047545">
    <property type="term" value="F:2-hydroxyglutarate dehydrogenase activity"/>
    <property type="evidence" value="ECO:0007669"/>
    <property type="project" value="TreeGrafter"/>
</dbReference>
<dbReference type="GO" id="GO:0008924">
    <property type="term" value="F:L-malate dehydrogenase (quinone) activity"/>
    <property type="evidence" value="ECO:0007669"/>
    <property type="project" value="UniProtKB-UniRule"/>
</dbReference>
<dbReference type="GO" id="GO:0006099">
    <property type="term" value="P:tricarboxylic acid cycle"/>
    <property type="evidence" value="ECO:0007669"/>
    <property type="project" value="UniProtKB-UniRule"/>
</dbReference>
<dbReference type="Gene3D" id="3.30.9.10">
    <property type="entry name" value="D-Amino Acid Oxidase, subunit A, domain 2"/>
    <property type="match status" value="1"/>
</dbReference>
<dbReference type="Gene3D" id="3.50.50.60">
    <property type="entry name" value="FAD/NAD(P)-binding domain"/>
    <property type="match status" value="1"/>
</dbReference>
<dbReference type="HAMAP" id="MF_00212">
    <property type="entry name" value="MQO"/>
    <property type="match status" value="1"/>
</dbReference>
<dbReference type="InterPro" id="IPR036188">
    <property type="entry name" value="FAD/NAD-bd_sf"/>
</dbReference>
<dbReference type="InterPro" id="IPR006231">
    <property type="entry name" value="MQO"/>
</dbReference>
<dbReference type="NCBIfam" id="TIGR01320">
    <property type="entry name" value="mal_quin_oxido"/>
    <property type="match status" value="1"/>
</dbReference>
<dbReference type="NCBIfam" id="NF003603">
    <property type="entry name" value="PRK05257.1-1"/>
    <property type="match status" value="1"/>
</dbReference>
<dbReference type="NCBIfam" id="NF003605">
    <property type="entry name" value="PRK05257.1-4"/>
    <property type="match status" value="1"/>
</dbReference>
<dbReference type="NCBIfam" id="NF003606">
    <property type="entry name" value="PRK05257.2-1"/>
    <property type="match status" value="1"/>
</dbReference>
<dbReference type="NCBIfam" id="NF003608">
    <property type="entry name" value="PRK05257.2-4"/>
    <property type="match status" value="1"/>
</dbReference>
<dbReference type="NCBIfam" id="NF003611">
    <property type="entry name" value="PRK05257.3-2"/>
    <property type="match status" value="1"/>
</dbReference>
<dbReference type="NCBIfam" id="NF009875">
    <property type="entry name" value="PRK13339.1"/>
    <property type="match status" value="1"/>
</dbReference>
<dbReference type="PANTHER" id="PTHR43104">
    <property type="entry name" value="L-2-HYDROXYGLUTARATE DEHYDROGENASE, MITOCHONDRIAL"/>
    <property type="match status" value="1"/>
</dbReference>
<dbReference type="PANTHER" id="PTHR43104:SF2">
    <property type="entry name" value="L-2-HYDROXYGLUTARATE DEHYDROGENASE, MITOCHONDRIAL"/>
    <property type="match status" value="1"/>
</dbReference>
<dbReference type="Pfam" id="PF06039">
    <property type="entry name" value="Mqo"/>
    <property type="match status" value="1"/>
</dbReference>
<dbReference type="SUPFAM" id="SSF51905">
    <property type="entry name" value="FAD/NAD(P)-binding domain"/>
    <property type="match status" value="1"/>
</dbReference>
<protein>
    <recommendedName>
        <fullName evidence="1">Probable malate:quinone oxidoreductase</fullName>
        <ecNumber evidence="1">1.1.5.4</ecNumber>
    </recommendedName>
    <alternativeName>
        <fullName evidence="1">MQO</fullName>
    </alternativeName>
    <alternativeName>
        <fullName evidence="1">Malate dehydrogenase [quinone]</fullName>
    </alternativeName>
</protein>
<evidence type="ECO:0000255" key="1">
    <source>
        <dbReference type="HAMAP-Rule" id="MF_00212"/>
    </source>
</evidence>
<evidence type="ECO:0000256" key="2">
    <source>
        <dbReference type="SAM" id="MobiDB-lite"/>
    </source>
</evidence>
<comment type="catalytic activity">
    <reaction evidence="1">
        <text>(S)-malate + a quinone = a quinol + oxaloacetate</text>
        <dbReference type="Rhea" id="RHEA:46012"/>
        <dbReference type="ChEBI" id="CHEBI:15589"/>
        <dbReference type="ChEBI" id="CHEBI:16452"/>
        <dbReference type="ChEBI" id="CHEBI:24646"/>
        <dbReference type="ChEBI" id="CHEBI:132124"/>
        <dbReference type="EC" id="1.1.5.4"/>
    </reaction>
</comment>
<comment type="cofactor">
    <cofactor evidence="1">
        <name>FAD</name>
        <dbReference type="ChEBI" id="CHEBI:57692"/>
    </cofactor>
</comment>
<comment type="pathway">
    <text evidence="1">Carbohydrate metabolism; tricarboxylic acid cycle; oxaloacetate from (S)-malate (quinone route): step 1/1.</text>
</comment>
<comment type="similarity">
    <text evidence="1">Belongs to the MQO family.</text>
</comment>
<keyword id="KW-0274">FAD</keyword>
<keyword id="KW-0285">Flavoprotein</keyword>
<keyword id="KW-0560">Oxidoreductase</keyword>
<keyword id="KW-1185">Reference proteome</keyword>
<keyword id="KW-0816">Tricarboxylic acid cycle</keyword>